<keyword id="KW-0010">Activator</keyword>
<keyword id="KW-0238">DNA-binding</keyword>
<keyword id="KW-0539">Nucleus</keyword>
<keyword id="KW-0611">Plant defense</keyword>
<keyword id="KW-1185">Reference proteome</keyword>
<keyword id="KW-0677">Repeat</keyword>
<keyword id="KW-0804">Transcription</keyword>
<keyword id="KW-0805">Transcription regulation</keyword>
<keyword id="KW-0832">Ubl conjugation</keyword>
<sequence length="323" mass="37020">MDEKGRSLKNNNMEDEMDLKRGPWTAEEDFKLMNYIATNGEGRWNSLSRCAGLQRTGKSCRLRWLNYLRPDVRRGNITLEEQLLILELHSRWGNRWSKIAQYLPGRTDNEIKNYWRTRVQKHAKQLKCDVNSQQFKDTMKYLWMPRLVERIQSASASSAAAATTTTTTTTGSAGTSSCITTSNNQFMNYDYNNNNMGQQFGVMSNNDYITPENSSVAVSPASDLTEYYSAPNPNPEYYSGQMGNSYYPDQNLVSSQLLPDNYFDYSGLLDEDLTAMQEQSNLSWFENINGAASSSDSLWNIGETDEEFWFLQQQQQFNNNGSF</sequence>
<protein>
    <recommendedName>
        <fullName>Transcription factor MYB108</fullName>
    </recommendedName>
    <alternativeName>
        <fullName>Myb-related protein 108</fullName>
        <shortName>AtMYB108</shortName>
    </alternativeName>
    <alternativeName>
        <fullName>Protein BOTRYTIS-SUSCEPTIBLE 1</fullName>
    </alternativeName>
</protein>
<feature type="chain" id="PRO_0000424714" description="Transcription factor MYB108">
    <location>
        <begin position="1"/>
        <end position="323"/>
    </location>
</feature>
<feature type="domain" description="HTH myb-type 1" evidence="1">
    <location>
        <begin position="16"/>
        <end position="68"/>
    </location>
</feature>
<feature type="domain" description="HTH myb-type 2" evidence="1">
    <location>
        <begin position="69"/>
        <end position="123"/>
    </location>
</feature>
<feature type="DNA-binding region" description="H-T-H motif" evidence="1">
    <location>
        <begin position="44"/>
        <end position="68"/>
    </location>
</feature>
<feature type="DNA-binding region" description="H-T-H motif" evidence="1">
    <location>
        <begin position="96"/>
        <end position="119"/>
    </location>
</feature>
<feature type="sequence conflict" description="In Ref. 2; AAS10054." evidence="6" ref="2">
    <original>S</original>
    <variation>F</variation>
    <location>
        <position position="214"/>
    </location>
</feature>
<feature type="sequence conflict" description="In Ref. 2; AAS10054." evidence="6" ref="2">
    <original>A</original>
    <variation>V</variation>
    <location>
        <position position="292"/>
    </location>
</feature>
<comment type="function">
    <text evidence="2 3 4 5">Transcription factor contributing to the regulation of stamen maturation and male fertility in response to jasmonate signaling. Required for correct timing of anther dehiscence. Acts as a negative regulator of abscisic acid-induced cell death. Not involved in the regulation of BOI. Regulated by MYB21 and at a lower level by MYB24. Negatively regulated by the proteasome in an SCF(COI1) E3 ubiquitin-protein ligase complex-dependent manner.</text>
</comment>
<comment type="subunit">
    <text evidence="4">Interacts with BOI, but not with BRG1.</text>
</comment>
<comment type="subcellular location">
    <subcellularLocation>
        <location evidence="1 4">Nucleus</location>
    </subcellularLocation>
</comment>
<comment type="tissue specificity">
    <text evidence="3">Expressed specifically in flowers. Restricted to anthers in maturing flowers. Strongest expression in the vascular and connective tissue where the anther attaches to the filament. Not detected in pollen.</text>
</comment>
<comment type="induction">
    <text evidence="2 3">Up-regulated by jasmonate and pathogen infection.</text>
</comment>
<comment type="PTM">
    <text evidence="4">Ubiquitinated in vitro by BOI.</text>
</comment>
<comment type="disruption phenotype">
    <text evidence="2 3">Reduced male fertility associated with delayed anther dehiscence, reduced pollen viability and decreased fecundity. Increased susceptibility to Botrytis infection. Myb24 and myb108 double mutant has a reduced fertility and a greatly reduced seed set relative to the myb108 parental allele.</text>
</comment>
<organism>
    <name type="scientific">Arabidopsis thaliana</name>
    <name type="common">Mouse-ear cress</name>
    <dbReference type="NCBI Taxonomy" id="3702"/>
    <lineage>
        <taxon>Eukaryota</taxon>
        <taxon>Viridiplantae</taxon>
        <taxon>Streptophyta</taxon>
        <taxon>Embryophyta</taxon>
        <taxon>Tracheophyta</taxon>
        <taxon>Spermatophyta</taxon>
        <taxon>Magnoliopsida</taxon>
        <taxon>eudicotyledons</taxon>
        <taxon>Gunneridae</taxon>
        <taxon>Pentapetalae</taxon>
        <taxon>rosids</taxon>
        <taxon>malvids</taxon>
        <taxon>Brassicales</taxon>
        <taxon>Brassicaceae</taxon>
        <taxon>Camelineae</taxon>
        <taxon>Arabidopsis</taxon>
    </lineage>
</organism>
<name>MY108_ARATH</name>
<accession>Q9LDE1</accession>
<accession>Q6R095</accession>
<proteinExistence type="evidence at protein level"/>
<evidence type="ECO:0000255" key="1">
    <source>
        <dbReference type="PROSITE-ProRule" id="PRU00625"/>
    </source>
</evidence>
<evidence type="ECO:0000269" key="2">
    <source>
    </source>
</evidence>
<evidence type="ECO:0000269" key="3">
    <source>
    </source>
</evidence>
<evidence type="ECO:0000269" key="4">
    <source>
    </source>
</evidence>
<evidence type="ECO:0000269" key="5">
    <source>
    </source>
</evidence>
<evidence type="ECO:0000305" key="6"/>
<gene>
    <name type="primary">MYB108</name>
    <name type="synonym">BOS1</name>
    <name type="ordered locus">At3g06490</name>
    <name type="ORF">F5E6.18</name>
</gene>
<dbReference type="EMBL" id="AF262733">
    <property type="protein sequence ID" value="AAF72668.1"/>
    <property type="molecule type" value="mRNA"/>
</dbReference>
<dbReference type="EMBL" id="AY519584">
    <property type="protein sequence ID" value="AAS10054.1"/>
    <property type="molecule type" value="mRNA"/>
</dbReference>
<dbReference type="EMBL" id="AC020580">
    <property type="protein sequence ID" value="AAG51322.1"/>
    <property type="molecule type" value="Genomic_DNA"/>
</dbReference>
<dbReference type="EMBL" id="CP002686">
    <property type="protein sequence ID" value="AEE74402.1"/>
    <property type="molecule type" value="Genomic_DNA"/>
</dbReference>
<dbReference type="RefSeq" id="NP_187301.1">
    <property type="nucleotide sequence ID" value="NM_111525.4"/>
</dbReference>
<dbReference type="SMR" id="Q9LDE1"/>
<dbReference type="BioGRID" id="5162">
    <property type="interactions" value="6"/>
</dbReference>
<dbReference type="FunCoup" id="Q9LDE1">
    <property type="interactions" value="67"/>
</dbReference>
<dbReference type="IntAct" id="Q9LDE1">
    <property type="interactions" value="2"/>
</dbReference>
<dbReference type="STRING" id="3702.Q9LDE1"/>
<dbReference type="PaxDb" id="3702-AT3G06490.1"/>
<dbReference type="ProteomicsDB" id="251254"/>
<dbReference type="EnsemblPlants" id="AT3G06490.1">
    <property type="protein sequence ID" value="AT3G06490.1"/>
    <property type="gene ID" value="AT3G06490"/>
</dbReference>
<dbReference type="GeneID" id="819827"/>
<dbReference type="Gramene" id="AT3G06490.1">
    <property type="protein sequence ID" value="AT3G06490.1"/>
    <property type="gene ID" value="AT3G06490"/>
</dbReference>
<dbReference type="KEGG" id="ath:AT3G06490"/>
<dbReference type="Araport" id="AT3G06490"/>
<dbReference type="TAIR" id="AT3G06490">
    <property type="gene designation" value="MYB108"/>
</dbReference>
<dbReference type="eggNOG" id="KOG0048">
    <property type="taxonomic scope" value="Eukaryota"/>
</dbReference>
<dbReference type="HOGENOM" id="CLU_028567_8_2_1"/>
<dbReference type="InParanoid" id="Q9LDE1"/>
<dbReference type="OMA" id="LNWFEDI"/>
<dbReference type="OrthoDB" id="2143914at2759"/>
<dbReference type="PhylomeDB" id="Q9LDE1"/>
<dbReference type="PRO" id="PR:Q9LDE1"/>
<dbReference type="Proteomes" id="UP000006548">
    <property type="component" value="Chromosome 3"/>
</dbReference>
<dbReference type="ExpressionAtlas" id="Q9LDE1">
    <property type="expression patterns" value="baseline and differential"/>
</dbReference>
<dbReference type="GO" id="GO:0005634">
    <property type="term" value="C:nucleus"/>
    <property type="evidence" value="ECO:0000314"/>
    <property type="project" value="TAIR"/>
</dbReference>
<dbReference type="GO" id="GO:0003700">
    <property type="term" value="F:DNA-binding transcription factor activity"/>
    <property type="evidence" value="ECO:0000250"/>
    <property type="project" value="TAIR"/>
</dbReference>
<dbReference type="GO" id="GO:0000976">
    <property type="term" value="F:transcription cis-regulatory region binding"/>
    <property type="evidence" value="ECO:0000353"/>
    <property type="project" value="TAIR"/>
</dbReference>
<dbReference type="GO" id="GO:0008219">
    <property type="term" value="P:cell death"/>
    <property type="evidence" value="ECO:0000315"/>
    <property type="project" value="TAIR"/>
</dbReference>
<dbReference type="GO" id="GO:0006952">
    <property type="term" value="P:defense response"/>
    <property type="evidence" value="ECO:0007669"/>
    <property type="project" value="UniProtKB-KW"/>
</dbReference>
<dbReference type="GO" id="GO:0120195">
    <property type="term" value="P:positive regulation of anther dehiscence"/>
    <property type="evidence" value="ECO:0000315"/>
    <property type="project" value="TAIR"/>
</dbReference>
<dbReference type="GO" id="GO:0009620">
    <property type="term" value="P:response to fungus"/>
    <property type="evidence" value="ECO:0000315"/>
    <property type="project" value="TAIR"/>
</dbReference>
<dbReference type="CDD" id="cd00167">
    <property type="entry name" value="SANT"/>
    <property type="match status" value="2"/>
</dbReference>
<dbReference type="FunFam" id="1.10.10.60:FF:000107">
    <property type="entry name" value="MYB transcription factor"/>
    <property type="match status" value="1"/>
</dbReference>
<dbReference type="FunFam" id="1.10.10.60:FF:000011">
    <property type="entry name" value="Myb transcription factor"/>
    <property type="match status" value="1"/>
</dbReference>
<dbReference type="Gene3D" id="1.10.10.60">
    <property type="entry name" value="Homeodomain-like"/>
    <property type="match status" value="2"/>
</dbReference>
<dbReference type="InterPro" id="IPR044676">
    <property type="entry name" value="EOBI/EOBII-like_plant"/>
</dbReference>
<dbReference type="InterPro" id="IPR009057">
    <property type="entry name" value="Homeodomain-like_sf"/>
</dbReference>
<dbReference type="InterPro" id="IPR017930">
    <property type="entry name" value="Myb_dom"/>
</dbReference>
<dbReference type="InterPro" id="IPR001005">
    <property type="entry name" value="SANT/Myb"/>
</dbReference>
<dbReference type="PANTHER" id="PTHR45675">
    <property type="entry name" value="MYB TRANSCRIPTION FACTOR-RELATED-RELATED"/>
    <property type="match status" value="1"/>
</dbReference>
<dbReference type="PANTHER" id="PTHR45675:SF45">
    <property type="entry name" value="TRANSCRIPTION FACTOR MYB108"/>
    <property type="match status" value="1"/>
</dbReference>
<dbReference type="Pfam" id="PF00249">
    <property type="entry name" value="Myb_DNA-binding"/>
    <property type="match status" value="2"/>
</dbReference>
<dbReference type="SMART" id="SM00717">
    <property type="entry name" value="SANT"/>
    <property type="match status" value="2"/>
</dbReference>
<dbReference type="SUPFAM" id="SSF46689">
    <property type="entry name" value="Homeodomain-like"/>
    <property type="match status" value="1"/>
</dbReference>
<dbReference type="PROSITE" id="PS51294">
    <property type="entry name" value="HTH_MYB"/>
    <property type="match status" value="2"/>
</dbReference>
<reference key="1">
    <citation type="journal article" date="2001" name="Curr. Opin. Plant Biol.">
        <title>The R2R3-MYB gene family in Arabidopsis thaliana.</title>
        <authorList>
            <person name="Stracke R."/>
            <person name="Werber M."/>
            <person name="Weisshaar B."/>
        </authorList>
    </citation>
    <scope>NUCLEOTIDE SEQUENCE [MRNA]</scope>
    <source>
        <strain>cv. Columbia</strain>
    </source>
</reference>
<reference key="2">
    <citation type="submission" date="2004-01" db="EMBL/GenBank/DDBJ databases">
        <title>The MYB transcription factor family in Arabidopsis: a genome-wide cloning and expression pattern analysis.</title>
        <authorList>
            <person name="Qu L."/>
            <person name="Gu H."/>
        </authorList>
    </citation>
    <scope>NUCLEOTIDE SEQUENCE [MRNA]</scope>
</reference>
<reference key="3">
    <citation type="journal article" date="2000" name="Nature">
        <title>Sequence and analysis of chromosome 3 of the plant Arabidopsis thaliana.</title>
        <authorList>
            <person name="Salanoubat M."/>
            <person name="Lemcke K."/>
            <person name="Rieger M."/>
            <person name="Ansorge W."/>
            <person name="Unseld M."/>
            <person name="Fartmann B."/>
            <person name="Valle G."/>
            <person name="Bloecker H."/>
            <person name="Perez-Alonso M."/>
            <person name="Obermaier B."/>
            <person name="Delseny M."/>
            <person name="Boutry M."/>
            <person name="Grivell L.A."/>
            <person name="Mache R."/>
            <person name="Puigdomenech P."/>
            <person name="De Simone V."/>
            <person name="Choisne N."/>
            <person name="Artiguenave F."/>
            <person name="Robert C."/>
            <person name="Brottier P."/>
            <person name="Wincker P."/>
            <person name="Cattolico L."/>
            <person name="Weissenbach J."/>
            <person name="Saurin W."/>
            <person name="Quetier F."/>
            <person name="Schaefer M."/>
            <person name="Mueller-Auer S."/>
            <person name="Gabel C."/>
            <person name="Fuchs M."/>
            <person name="Benes V."/>
            <person name="Wurmbach E."/>
            <person name="Drzonek H."/>
            <person name="Erfle H."/>
            <person name="Jordan N."/>
            <person name="Bangert S."/>
            <person name="Wiedelmann R."/>
            <person name="Kranz H."/>
            <person name="Voss H."/>
            <person name="Holland R."/>
            <person name="Brandt P."/>
            <person name="Nyakatura G."/>
            <person name="Vezzi A."/>
            <person name="D'Angelo M."/>
            <person name="Pallavicini A."/>
            <person name="Toppo S."/>
            <person name="Simionati B."/>
            <person name="Conrad A."/>
            <person name="Hornischer K."/>
            <person name="Kauer G."/>
            <person name="Loehnert T.-H."/>
            <person name="Nordsiek G."/>
            <person name="Reichelt J."/>
            <person name="Scharfe M."/>
            <person name="Schoen O."/>
            <person name="Bargues M."/>
            <person name="Terol J."/>
            <person name="Climent J."/>
            <person name="Navarro P."/>
            <person name="Collado C."/>
            <person name="Perez-Perez A."/>
            <person name="Ottenwaelder B."/>
            <person name="Duchemin D."/>
            <person name="Cooke R."/>
            <person name="Laudie M."/>
            <person name="Berger-Llauro C."/>
            <person name="Purnelle B."/>
            <person name="Masuy D."/>
            <person name="de Haan M."/>
            <person name="Maarse A.C."/>
            <person name="Alcaraz J.-P."/>
            <person name="Cottet A."/>
            <person name="Casacuberta E."/>
            <person name="Monfort A."/>
            <person name="Argiriou A."/>
            <person name="Flores M."/>
            <person name="Liguori R."/>
            <person name="Vitale D."/>
            <person name="Mannhaupt G."/>
            <person name="Haase D."/>
            <person name="Schoof H."/>
            <person name="Rudd S."/>
            <person name="Zaccaria P."/>
            <person name="Mewes H.-W."/>
            <person name="Mayer K.F.X."/>
            <person name="Kaul S."/>
            <person name="Town C.D."/>
            <person name="Koo H.L."/>
            <person name="Tallon L.J."/>
            <person name="Jenkins J."/>
            <person name="Rooney T."/>
            <person name="Rizzo M."/>
            <person name="Walts A."/>
            <person name="Utterback T."/>
            <person name="Fujii C.Y."/>
            <person name="Shea T.P."/>
            <person name="Creasy T.H."/>
            <person name="Haas B."/>
            <person name="Maiti R."/>
            <person name="Wu D."/>
            <person name="Peterson J."/>
            <person name="Van Aken S."/>
            <person name="Pai G."/>
            <person name="Militscher J."/>
            <person name="Sellers P."/>
            <person name="Gill J.E."/>
            <person name="Feldblyum T.V."/>
            <person name="Preuss D."/>
            <person name="Lin X."/>
            <person name="Nierman W.C."/>
            <person name="Salzberg S.L."/>
            <person name="White O."/>
            <person name="Venter J.C."/>
            <person name="Fraser C.M."/>
            <person name="Kaneko T."/>
            <person name="Nakamura Y."/>
            <person name="Sato S."/>
            <person name="Kato T."/>
            <person name="Asamizu E."/>
            <person name="Sasamoto S."/>
            <person name="Kimura T."/>
            <person name="Idesawa K."/>
            <person name="Kawashima K."/>
            <person name="Kishida Y."/>
            <person name="Kiyokawa C."/>
            <person name="Kohara M."/>
            <person name="Matsumoto M."/>
            <person name="Matsuno A."/>
            <person name="Muraki A."/>
            <person name="Nakayama S."/>
            <person name="Nakazaki N."/>
            <person name="Shinpo S."/>
            <person name="Takeuchi C."/>
            <person name="Wada T."/>
            <person name="Watanabe A."/>
            <person name="Yamada M."/>
            <person name="Yasuda M."/>
            <person name="Tabata S."/>
        </authorList>
    </citation>
    <scope>NUCLEOTIDE SEQUENCE [LARGE SCALE GENOMIC DNA]</scope>
    <source>
        <strain>cv. Columbia</strain>
    </source>
</reference>
<reference key="4">
    <citation type="journal article" date="2017" name="Plant J.">
        <title>Araport11: a complete reannotation of the Arabidopsis thaliana reference genome.</title>
        <authorList>
            <person name="Cheng C.Y."/>
            <person name="Krishnakumar V."/>
            <person name="Chan A.P."/>
            <person name="Thibaud-Nissen F."/>
            <person name="Schobel S."/>
            <person name="Town C.D."/>
        </authorList>
    </citation>
    <scope>GENOME REANNOTATION</scope>
    <source>
        <strain>cv. Columbia</strain>
    </source>
</reference>
<reference key="5">
    <citation type="journal article" date="2003" name="Plant Cell">
        <title>The BOTRYTIS SUSCEPTIBLE1 gene encodes an R2R3MYB transcription factor protein that is required for biotic and abiotic stress responses in Arabidopsis.</title>
        <authorList>
            <person name="Mengiste T."/>
            <person name="Chen X."/>
            <person name="Salmeron J."/>
            <person name="Dietrich R."/>
        </authorList>
    </citation>
    <scope>FUNCTION</scope>
    <scope>DISRUPTION PHENOTYPE</scope>
    <scope>INDUCTION BY PATHOGEN</scope>
</reference>
<reference key="6">
    <citation type="journal article" date="2009" name="Plant Physiol.">
        <title>MYB108 acts together with MYB24 to regulate jasmonate-mediated stamen maturation in Arabidopsis.</title>
        <authorList>
            <person name="Mandaokar A."/>
            <person name="Browse J."/>
        </authorList>
    </citation>
    <scope>FUNCTION</scope>
    <scope>DISRUPTION PHENOTYPE</scope>
    <scope>TISSUE SPECIFICITY</scope>
    <scope>INDUCTION BY JASMONATE</scope>
</reference>
<reference key="7">
    <citation type="journal article" date="2010" name="Plant Physiol.">
        <title>The Arabidopsis Botrytis Susceptible1 Interactor defines a subclass of RING E3 ligases that regulate pathogen and stress responses.</title>
        <authorList>
            <person name="Luo H."/>
            <person name="Laluk K."/>
            <person name="Lai Z."/>
            <person name="Veronese P."/>
            <person name="Song F."/>
            <person name="Mengiste T."/>
        </authorList>
    </citation>
    <scope>FUNCTION</scope>
    <scope>SUBCELLULAR LOCATION</scope>
    <scope>INTERACTION WITH BOI AND BRG1</scope>
    <scope>UBIQUITINATION</scope>
</reference>
<reference key="8">
    <citation type="journal article" date="2013" name="New Phytol.">
        <title>Regulation of ABA dependent wound induced spreading cell death by MYB108.</title>
        <authorList>
            <person name="Cui F."/>
            <person name="Brosche M."/>
            <person name="Sipari N."/>
            <person name="Tang S."/>
            <person name="Overmyer K."/>
        </authorList>
    </citation>
    <scope>FUNCTION</scope>
</reference>